<evidence type="ECO:0000250" key="1">
    <source>
        <dbReference type="UniProtKB" id="P10235"/>
    </source>
</evidence>
<evidence type="ECO:0000250" key="2">
    <source>
        <dbReference type="UniProtKB" id="P16823"/>
    </source>
</evidence>
<evidence type="ECO:0000305" key="3"/>
<feature type="chain" id="PRO_0000405718" description="Tegument protein UL51 homolog">
    <location>
        <begin position="1"/>
        <end position="220"/>
    </location>
</feature>
<feature type="lipid moiety-binding region" description="S-palmitoyl cysteine; by host" evidence="1">
    <location>
        <position position="11"/>
    </location>
</feature>
<proteinExistence type="inferred from homology"/>
<name>TEG7_ALHV1</name>
<organismHost>
    <name type="scientific">Connochaetes taurinus</name>
    <name type="common">Blue wildebeest</name>
    <dbReference type="NCBI Taxonomy" id="9927"/>
</organismHost>
<sequence length="220" mass="24618">MASRWMEWTCCGLWLFGKPTQKKYTQLFEEPSYKCSERVKQEINKGLPPGVSVGDLILGDKSTEALNQAHLLALQSNNITEYLARFNAAEIPASCQGIVSNQIDKLKAMQSVIWNAMISIATSNVELSDSGFQLLLDKQACENMTLMEMEKLATAISVDNTTNWAREISNIIITQPTHALPEAVPEKPEPIYDDPEELESTMLLQPTQQKKTTVTQQQIL</sequence>
<gene>
    <name type="primary">55</name>
</gene>
<dbReference type="EMBL" id="AF005370">
    <property type="protein sequence ID" value="AAC58102.1"/>
    <property type="molecule type" value="Genomic_DNA"/>
</dbReference>
<dbReference type="PIR" id="T03150">
    <property type="entry name" value="T03150"/>
</dbReference>
<dbReference type="RefSeq" id="NP_065554.1">
    <property type="nucleotide sequence ID" value="NC_002531.1"/>
</dbReference>
<dbReference type="SMR" id="O36405"/>
<dbReference type="KEGG" id="vg:911779"/>
<dbReference type="Proteomes" id="UP000000941">
    <property type="component" value="Segment"/>
</dbReference>
<dbReference type="GO" id="GO:0044177">
    <property type="term" value="C:host cell Golgi apparatus"/>
    <property type="evidence" value="ECO:0007669"/>
    <property type="project" value="UniProtKB-SubCell"/>
</dbReference>
<dbReference type="GO" id="GO:0019033">
    <property type="term" value="C:viral tegument"/>
    <property type="evidence" value="ECO:0007669"/>
    <property type="project" value="UniProtKB-SubCell"/>
</dbReference>
<dbReference type="InterPro" id="IPR007619">
    <property type="entry name" value="Herpes_U44"/>
</dbReference>
<dbReference type="Pfam" id="PF04533">
    <property type="entry name" value="Herpes_U44"/>
    <property type="match status" value="1"/>
</dbReference>
<comment type="function">
    <text evidence="1">Plays several roles during the time course of infection, including egress of virus particles from the perinuclear space and secondary envelopment of cytoplasmic capsids that bud into specific trans-Golgi network (TGN)-derived membranes.</text>
</comment>
<comment type="subunit">
    <text evidence="1 2">Oligomerizes. Interacts with UL7 homolog; this interaction mediates UL7 homolog incorporation to virions.</text>
</comment>
<comment type="subcellular location">
    <subcellularLocation>
        <location evidence="1">Virion tegument</location>
    </subcellularLocation>
    <subcellularLocation>
        <location evidence="1">Host cytoplasm</location>
    </subcellularLocation>
    <subcellularLocation>
        <location evidence="1">Host Golgi apparatus</location>
    </subcellularLocation>
</comment>
<comment type="PTM">
    <text evidence="1">Phosphorylated.</text>
</comment>
<comment type="PTM">
    <text evidence="1">Palmitoylation is necessary for Golgi localization.</text>
</comment>
<comment type="similarity">
    <text evidence="3">Belongs to the herpesviridae UL51 family.</text>
</comment>
<protein>
    <recommendedName>
        <fullName>Tegument protein UL51 homolog</fullName>
    </recommendedName>
    <alternativeName>
        <fullName>Uncharacterized gene 55 protein</fullName>
    </alternativeName>
</protein>
<keyword id="KW-1035">Host cytoplasm</keyword>
<keyword id="KW-1040">Host Golgi apparatus</keyword>
<keyword id="KW-0449">Lipoprotein</keyword>
<keyword id="KW-0564">Palmitate</keyword>
<keyword id="KW-0597">Phosphoprotein</keyword>
<keyword id="KW-1185">Reference proteome</keyword>
<keyword id="KW-0946">Virion</keyword>
<keyword id="KW-0920">Virion tegument</keyword>
<accession>O36405</accession>
<reference key="1">
    <citation type="journal article" date="1997" name="J. Virol.">
        <title>Primary structure of the alcelaphine herpesvirus 1 genome.</title>
        <authorList>
            <person name="Ensser A."/>
            <person name="Pflanz R."/>
            <person name="Fleckenstein B."/>
        </authorList>
    </citation>
    <scope>NUCLEOTIDE SEQUENCE [LARGE SCALE GENOMIC DNA]</scope>
</reference>
<organism>
    <name type="scientific">Alcelaphine herpesvirus 1 (strain C500)</name>
    <name type="common">AlHV-1</name>
    <name type="synonym">Malignant catarrhal fever virus</name>
    <dbReference type="NCBI Taxonomy" id="654901"/>
    <lineage>
        <taxon>Viruses</taxon>
        <taxon>Duplodnaviria</taxon>
        <taxon>Heunggongvirae</taxon>
        <taxon>Peploviricota</taxon>
        <taxon>Herviviricetes</taxon>
        <taxon>Herpesvirales</taxon>
        <taxon>Orthoherpesviridae</taxon>
        <taxon>Gammaherpesvirinae</taxon>
        <taxon>Macavirus</taxon>
        <taxon>Macavirus alcelaphinegamma1</taxon>
    </lineage>
</organism>